<comment type="function">
    <text evidence="1">Transfers the gamma-phosphate of ATP to the 4'-position of a tetraacyldisaccharide 1-phosphate intermediate (termed DS-1-P) to form tetraacyldisaccharide 1,4'-bis-phosphate (lipid IVA).</text>
</comment>
<comment type="catalytic activity">
    <reaction evidence="1">
        <text>a lipid A disaccharide + ATP = a lipid IVA + ADP + H(+)</text>
        <dbReference type="Rhea" id="RHEA:67840"/>
        <dbReference type="ChEBI" id="CHEBI:15378"/>
        <dbReference type="ChEBI" id="CHEBI:30616"/>
        <dbReference type="ChEBI" id="CHEBI:176343"/>
        <dbReference type="ChEBI" id="CHEBI:176425"/>
        <dbReference type="ChEBI" id="CHEBI:456216"/>
        <dbReference type="EC" id="2.7.1.130"/>
    </reaction>
</comment>
<comment type="pathway">
    <text evidence="1">Glycolipid biosynthesis; lipid IV(A) biosynthesis; lipid IV(A) from (3R)-3-hydroxytetradecanoyl-[acyl-carrier-protein] and UDP-N-acetyl-alpha-D-glucosamine: step 6/6.</text>
</comment>
<comment type="similarity">
    <text evidence="1">Belongs to the LpxK family.</text>
</comment>
<organism>
    <name type="scientific">Shigella dysenteriae serotype 1 (strain Sd197)</name>
    <dbReference type="NCBI Taxonomy" id="300267"/>
    <lineage>
        <taxon>Bacteria</taxon>
        <taxon>Pseudomonadati</taxon>
        <taxon>Pseudomonadota</taxon>
        <taxon>Gammaproteobacteria</taxon>
        <taxon>Enterobacterales</taxon>
        <taxon>Enterobacteriaceae</taxon>
        <taxon>Shigella</taxon>
    </lineage>
</organism>
<accession>Q32E35</accession>
<name>LPXK_SHIDS</name>
<sequence length="328" mass="35554">MIEKIWSGESPLWRLLLPLSWLYGLVSGAIRLCYKLKLKRAWRAPVPVVVVGNLTAGGNGKTPVVVWLVEQLQQRGIRVGVVSRGYGGKAESYPLLLSADTTTAQAGDEPVLIYQRTDAPVAVSPVRSDAVKAILAQHPDVQIIVTDDGLQHYCLARDVEIVVIDGVRRFGNGWWLPAGPMRERAGRLKSIDAVIVNGGVPRSGEIPMHLLPGQAVNLRTGTRCDVAQLEHVVAMAGIGHPPRFFATLKMCGVQPEKCVPLADHQSLNHADVSALVSTGQTLVMTEKDAVKCWAFAEENWWYLPVDAQLSGDEPAKLLAQLTSLASGN</sequence>
<gene>
    <name evidence="1" type="primary">lpxK</name>
    <name type="ordered locus">SDY_2343</name>
</gene>
<keyword id="KW-0067">ATP-binding</keyword>
<keyword id="KW-0418">Kinase</keyword>
<keyword id="KW-0441">Lipid A biosynthesis</keyword>
<keyword id="KW-0444">Lipid biosynthesis</keyword>
<keyword id="KW-0443">Lipid metabolism</keyword>
<keyword id="KW-0547">Nucleotide-binding</keyword>
<keyword id="KW-1185">Reference proteome</keyword>
<keyword id="KW-0808">Transferase</keyword>
<feature type="chain" id="PRO_0000229981" description="Tetraacyldisaccharide 4'-kinase">
    <location>
        <begin position="1"/>
        <end position="328"/>
    </location>
</feature>
<feature type="binding site" evidence="1">
    <location>
        <begin position="55"/>
        <end position="62"/>
    </location>
    <ligand>
        <name>ATP</name>
        <dbReference type="ChEBI" id="CHEBI:30616"/>
    </ligand>
</feature>
<dbReference type="EC" id="2.7.1.130" evidence="1"/>
<dbReference type="EMBL" id="CP000034">
    <property type="protein sequence ID" value="ABB62420.1"/>
    <property type="molecule type" value="Genomic_DNA"/>
</dbReference>
<dbReference type="RefSeq" id="WP_000570528.1">
    <property type="nucleotide sequence ID" value="NC_007606.1"/>
</dbReference>
<dbReference type="RefSeq" id="YP_403911.1">
    <property type="nucleotide sequence ID" value="NC_007606.1"/>
</dbReference>
<dbReference type="SMR" id="Q32E35"/>
<dbReference type="STRING" id="300267.SDY_2343"/>
<dbReference type="EnsemblBacteria" id="ABB62420">
    <property type="protein sequence ID" value="ABB62420"/>
    <property type="gene ID" value="SDY_2343"/>
</dbReference>
<dbReference type="KEGG" id="sdy:SDY_2343"/>
<dbReference type="PATRIC" id="fig|300267.13.peg.2827"/>
<dbReference type="HOGENOM" id="CLU_038816_2_0_6"/>
<dbReference type="UniPathway" id="UPA00359">
    <property type="reaction ID" value="UER00482"/>
</dbReference>
<dbReference type="Proteomes" id="UP000002716">
    <property type="component" value="Chromosome"/>
</dbReference>
<dbReference type="GO" id="GO:0005886">
    <property type="term" value="C:plasma membrane"/>
    <property type="evidence" value="ECO:0007669"/>
    <property type="project" value="TreeGrafter"/>
</dbReference>
<dbReference type="GO" id="GO:0005524">
    <property type="term" value="F:ATP binding"/>
    <property type="evidence" value="ECO:0007669"/>
    <property type="project" value="UniProtKB-UniRule"/>
</dbReference>
<dbReference type="GO" id="GO:0009029">
    <property type="term" value="F:tetraacyldisaccharide 4'-kinase activity"/>
    <property type="evidence" value="ECO:0007669"/>
    <property type="project" value="UniProtKB-UniRule"/>
</dbReference>
<dbReference type="GO" id="GO:0009245">
    <property type="term" value="P:lipid A biosynthetic process"/>
    <property type="evidence" value="ECO:0007669"/>
    <property type="project" value="UniProtKB-UniRule"/>
</dbReference>
<dbReference type="GO" id="GO:0009244">
    <property type="term" value="P:lipopolysaccharide core region biosynthetic process"/>
    <property type="evidence" value="ECO:0007669"/>
    <property type="project" value="TreeGrafter"/>
</dbReference>
<dbReference type="HAMAP" id="MF_00409">
    <property type="entry name" value="LpxK"/>
    <property type="match status" value="1"/>
</dbReference>
<dbReference type="InterPro" id="IPR003758">
    <property type="entry name" value="LpxK"/>
</dbReference>
<dbReference type="InterPro" id="IPR027417">
    <property type="entry name" value="P-loop_NTPase"/>
</dbReference>
<dbReference type="NCBIfam" id="TIGR00682">
    <property type="entry name" value="lpxK"/>
    <property type="match status" value="1"/>
</dbReference>
<dbReference type="PANTHER" id="PTHR42724">
    <property type="entry name" value="TETRAACYLDISACCHARIDE 4'-KINASE"/>
    <property type="match status" value="1"/>
</dbReference>
<dbReference type="PANTHER" id="PTHR42724:SF1">
    <property type="entry name" value="TETRAACYLDISACCHARIDE 4'-KINASE, MITOCHONDRIAL-RELATED"/>
    <property type="match status" value="1"/>
</dbReference>
<dbReference type="Pfam" id="PF02606">
    <property type="entry name" value="LpxK"/>
    <property type="match status" value="1"/>
</dbReference>
<dbReference type="SUPFAM" id="SSF52540">
    <property type="entry name" value="P-loop containing nucleoside triphosphate hydrolases"/>
    <property type="match status" value="1"/>
</dbReference>
<reference key="1">
    <citation type="journal article" date="2005" name="Nucleic Acids Res.">
        <title>Genome dynamics and diversity of Shigella species, the etiologic agents of bacillary dysentery.</title>
        <authorList>
            <person name="Yang F."/>
            <person name="Yang J."/>
            <person name="Zhang X."/>
            <person name="Chen L."/>
            <person name="Jiang Y."/>
            <person name="Yan Y."/>
            <person name="Tang X."/>
            <person name="Wang J."/>
            <person name="Xiong Z."/>
            <person name="Dong J."/>
            <person name="Xue Y."/>
            <person name="Zhu Y."/>
            <person name="Xu X."/>
            <person name="Sun L."/>
            <person name="Chen S."/>
            <person name="Nie H."/>
            <person name="Peng J."/>
            <person name="Xu J."/>
            <person name="Wang Y."/>
            <person name="Yuan Z."/>
            <person name="Wen Y."/>
            <person name="Yao Z."/>
            <person name="Shen Y."/>
            <person name="Qiang B."/>
            <person name="Hou Y."/>
            <person name="Yu J."/>
            <person name="Jin Q."/>
        </authorList>
    </citation>
    <scope>NUCLEOTIDE SEQUENCE [LARGE SCALE GENOMIC DNA]</scope>
    <source>
        <strain>Sd197</strain>
    </source>
</reference>
<protein>
    <recommendedName>
        <fullName evidence="1">Tetraacyldisaccharide 4'-kinase</fullName>
        <ecNumber evidence="1">2.7.1.130</ecNumber>
    </recommendedName>
    <alternativeName>
        <fullName evidence="1">Lipid A 4'-kinase</fullName>
    </alternativeName>
</protein>
<evidence type="ECO:0000255" key="1">
    <source>
        <dbReference type="HAMAP-Rule" id="MF_00409"/>
    </source>
</evidence>
<proteinExistence type="inferred from homology"/>